<comment type="subcellular location">
    <subcellularLocation>
        <location evidence="4">Membrane</location>
        <topology evidence="4">Multi-pass membrane protein</topology>
    </subcellularLocation>
</comment>
<comment type="similarity">
    <text evidence="4">Belongs to the ABC transporter superfamily. ABCG family. PDR (TC 3.A.1.205) subfamily.</text>
</comment>
<protein>
    <recommendedName>
        <fullName>ABC transporter G family member 14</fullName>
    </recommendedName>
    <alternativeName>
        <fullName>ABC transporter ABCG.14</fullName>
    </alternativeName>
</protein>
<gene>
    <name type="primary">abcG14</name>
    <name type="ORF">DDB_G0269210</name>
</gene>
<name>ABCGE_DICDI</name>
<keyword id="KW-0067">ATP-binding</keyword>
<keyword id="KW-0472">Membrane</keyword>
<keyword id="KW-0547">Nucleotide-binding</keyword>
<keyword id="KW-1185">Reference proteome</keyword>
<keyword id="KW-0677">Repeat</keyword>
<keyword id="KW-0812">Transmembrane</keyword>
<keyword id="KW-1133">Transmembrane helix</keyword>
<keyword id="KW-0813">Transport</keyword>
<reference key="1">
    <citation type="journal article" date="2002" name="Eukaryot. Cell">
        <title>Evolutionary analyses of ABC transporters of Dictyostelium discoideum.</title>
        <authorList>
            <person name="Anjard C."/>
            <person name="Loomis W.F."/>
        </authorList>
    </citation>
    <scope>NUCLEOTIDE SEQUENCE [GENOMIC DNA]</scope>
    <scope>NOMENCLATURE</scope>
    <source>
        <strain>AX4</strain>
    </source>
</reference>
<reference key="2">
    <citation type="journal article" date="2005" name="Nature">
        <title>The genome of the social amoeba Dictyostelium discoideum.</title>
        <authorList>
            <person name="Eichinger L."/>
            <person name="Pachebat J.A."/>
            <person name="Gloeckner G."/>
            <person name="Rajandream M.A."/>
            <person name="Sucgang R."/>
            <person name="Berriman M."/>
            <person name="Song J."/>
            <person name="Olsen R."/>
            <person name="Szafranski K."/>
            <person name="Xu Q."/>
            <person name="Tunggal B."/>
            <person name="Kummerfeld S."/>
            <person name="Madera M."/>
            <person name="Konfortov B.A."/>
            <person name="Rivero F."/>
            <person name="Bankier A.T."/>
            <person name="Lehmann R."/>
            <person name="Hamlin N."/>
            <person name="Davies R."/>
            <person name="Gaudet P."/>
            <person name="Fey P."/>
            <person name="Pilcher K."/>
            <person name="Chen G."/>
            <person name="Saunders D."/>
            <person name="Sodergren E.J."/>
            <person name="Davis P."/>
            <person name="Kerhornou A."/>
            <person name="Nie X."/>
            <person name="Hall N."/>
            <person name="Anjard C."/>
            <person name="Hemphill L."/>
            <person name="Bason N."/>
            <person name="Farbrother P."/>
            <person name="Desany B."/>
            <person name="Just E."/>
            <person name="Morio T."/>
            <person name="Rost R."/>
            <person name="Churcher C.M."/>
            <person name="Cooper J."/>
            <person name="Haydock S."/>
            <person name="van Driessche N."/>
            <person name="Cronin A."/>
            <person name="Goodhead I."/>
            <person name="Muzny D.M."/>
            <person name="Mourier T."/>
            <person name="Pain A."/>
            <person name="Lu M."/>
            <person name="Harper D."/>
            <person name="Lindsay R."/>
            <person name="Hauser H."/>
            <person name="James K.D."/>
            <person name="Quiles M."/>
            <person name="Madan Babu M."/>
            <person name="Saito T."/>
            <person name="Buchrieser C."/>
            <person name="Wardroper A."/>
            <person name="Felder M."/>
            <person name="Thangavelu M."/>
            <person name="Johnson D."/>
            <person name="Knights A."/>
            <person name="Loulseged H."/>
            <person name="Mungall K.L."/>
            <person name="Oliver K."/>
            <person name="Price C."/>
            <person name="Quail M.A."/>
            <person name="Urushihara H."/>
            <person name="Hernandez J."/>
            <person name="Rabbinowitsch E."/>
            <person name="Steffen D."/>
            <person name="Sanders M."/>
            <person name="Ma J."/>
            <person name="Kohara Y."/>
            <person name="Sharp S."/>
            <person name="Simmonds M.N."/>
            <person name="Spiegler S."/>
            <person name="Tivey A."/>
            <person name="Sugano S."/>
            <person name="White B."/>
            <person name="Walker D."/>
            <person name="Woodward J.R."/>
            <person name="Winckler T."/>
            <person name="Tanaka Y."/>
            <person name="Shaulsky G."/>
            <person name="Schleicher M."/>
            <person name="Weinstock G.M."/>
            <person name="Rosenthal A."/>
            <person name="Cox E.C."/>
            <person name="Chisholm R.L."/>
            <person name="Gibbs R.A."/>
            <person name="Loomis W.F."/>
            <person name="Platzer M."/>
            <person name="Kay R.R."/>
            <person name="Williams J.G."/>
            <person name="Dear P.H."/>
            <person name="Noegel A.A."/>
            <person name="Barrell B.G."/>
            <person name="Kuspa A."/>
        </authorList>
    </citation>
    <scope>NUCLEOTIDE SEQUENCE [LARGE SCALE GENOMIC DNA]</scope>
    <source>
        <strain>AX4</strain>
    </source>
</reference>
<sequence>MEENSNKFEQELKEIGQDRNQFPHISVEESLQEFDSFSNKIENESKQFGAQKDPESYMAGGETEEDFKLRKYFENSERMHLENGGNEKKMGVSIRNLTVVGLGADASVIADMSTPFFSILNFFKPSFWTKKTSTFDILHDVTTFCKDGEMVLVLGRPGAGCSTLLRVIANQTASYVSVKGDVRYGGIPSKEFERYRAESIYTPEEDSHHPTLTVRETLDFALKCKTPGNRLPDETKRSFREKVFNLLLSMFGIVHQADTIVGNEYVRGLSGGERKRLTITEAMVSSASITCWDCSTRGLDAASAFDYAKSIRIMSDTLHKTTIASFYQASDSIYNVFDKVCVLEKGRCIYFGPVGMAKQYFMSLGFDCEPRKSTPDFLTGVTNPQERIIKKGFEGRTPETSADFEAAWKNSDIYRDQLQEQKEYEELIERTQPKVAFVQEVKDENSKTNFKKSQYTTSFITQVVALTKRNFQLILNDKFGLFTKYLSVLIQAFVYSSVFYNMASDINGLFTRGGAILSAVIFNAFLSVGEMSMTFIGRRVLQKHKSYALYRPSALHIAQVVNDIPFTLLQVFLFSIIAYFMFGLEYDGGKFFIFSFTLVGASLACTALFRCFGYLCPSMYIAQNISNVFIIFMLTYSGYTVPIPKMHPWFSWFRHINIFTYAFKAIMANEFEGKEFNCLESAIPYGPAYQGSEFDAYRICPLGGIEQGSLYFKGEFYMDKTLRFKEGEMSQNVIIVYCWWIFFVICNMLAMEYIDHTSGGYTHKVYKKGKAPKMNDVEEEKQQNAIVANATNNMKDTLHMDGGIFTWQNIRYTVKVPGGERLLLNNIEGWIKPGQMTALMGSSGAGKTTLLDVLAKRKTLGVVEGDSHLNGRELEIDFERITGYVEQMDVHNPGLTVREALRFSAKLRQEPEVSLEEKFKYVEHVLEMMEMKHLGDALIGTLETGVGISVEERKRLTIGVELVAKPQILFLDEPTSGLDAQSSYNIIKFIRKLADAGMPLVCTIHQPSSVLFEHFDRILLLAKGGKTVYFGDIGEKSKTLTSYFERHGVRPCTESENPAEYILEATGAGVHGKSDVNWPETWKQSPELADISRELAALKEQGAQQYKIRSDGPAREFSQSTWYQTKEVYKRLNLIWWRDPYYTYGSFVQSALCGLIIGFTFWNLQGSSSDMNQRIFFIFEALMLGILLIFVVMPQLISQREYFKRDFASKFYSWFPFAISIVVVELPFIVISGTIFFFCSFWTAGLDKTSDSEQTFYFWFIFVIFLFFCVSFGQAVAAVCINMFFAMTLIPLLIVFLFLFSGVMTPPSSIPTFWRGWVYHLNPCRYFMEGIVTNILKTVDVKCSYEDMITFTFPKSYNTCQNYTSAFQSYGPSGYVESSILNGEPACSYCIYKNGEQYYKTLGWSDDNRWRNVGIIICFFVFNILMVILFVYLTRKGSR</sequence>
<dbReference type="EMBL" id="AF482392">
    <property type="protein sequence ID" value="AAL91499.1"/>
    <property type="molecule type" value="Genomic_DNA"/>
</dbReference>
<dbReference type="EMBL" id="AAFI02000005">
    <property type="protein sequence ID" value="EAL71955.1"/>
    <property type="molecule type" value="Genomic_DNA"/>
</dbReference>
<dbReference type="RefSeq" id="XP_646070.1">
    <property type="nucleotide sequence ID" value="XM_640978.1"/>
</dbReference>
<dbReference type="SMR" id="Q55DR1"/>
<dbReference type="FunCoup" id="Q55DR1">
    <property type="interactions" value="7"/>
</dbReference>
<dbReference type="PaxDb" id="44689-DDB0191234"/>
<dbReference type="EnsemblProtists" id="EAL71955">
    <property type="protein sequence ID" value="EAL71955"/>
    <property type="gene ID" value="DDB_G0269210"/>
</dbReference>
<dbReference type="GeneID" id="8617019"/>
<dbReference type="KEGG" id="ddi:DDB_G0269210"/>
<dbReference type="dictyBase" id="DDB_G0269210">
    <property type="gene designation" value="abcG14"/>
</dbReference>
<dbReference type="VEuPathDB" id="AmoebaDB:DDB_G0269210"/>
<dbReference type="eggNOG" id="KOG0065">
    <property type="taxonomic scope" value="Eukaryota"/>
</dbReference>
<dbReference type="HOGENOM" id="CLU_000604_35_0_1"/>
<dbReference type="InParanoid" id="Q55DR1"/>
<dbReference type="OMA" id="TGFVIRI"/>
<dbReference type="PhylomeDB" id="Q55DR1"/>
<dbReference type="PRO" id="PR:Q55DR1"/>
<dbReference type="Proteomes" id="UP000002195">
    <property type="component" value="Chromosome 1"/>
</dbReference>
<dbReference type="GO" id="GO:0016020">
    <property type="term" value="C:membrane"/>
    <property type="evidence" value="ECO:0007669"/>
    <property type="project" value="UniProtKB-SubCell"/>
</dbReference>
<dbReference type="GO" id="GO:0140359">
    <property type="term" value="F:ABC-type transporter activity"/>
    <property type="evidence" value="ECO:0007669"/>
    <property type="project" value="InterPro"/>
</dbReference>
<dbReference type="GO" id="GO:0005524">
    <property type="term" value="F:ATP binding"/>
    <property type="evidence" value="ECO:0007669"/>
    <property type="project" value="UniProtKB-KW"/>
</dbReference>
<dbReference type="GO" id="GO:0016887">
    <property type="term" value="F:ATP hydrolysis activity"/>
    <property type="evidence" value="ECO:0007669"/>
    <property type="project" value="InterPro"/>
</dbReference>
<dbReference type="GO" id="GO:0042626">
    <property type="term" value="F:ATPase-coupled transmembrane transporter activity"/>
    <property type="evidence" value="ECO:0000317"/>
    <property type="project" value="dictyBase"/>
</dbReference>
<dbReference type="GO" id="GO:0031152">
    <property type="term" value="P:aggregation involved in sorocarp development"/>
    <property type="evidence" value="ECO:0000318"/>
    <property type="project" value="GO_Central"/>
</dbReference>
<dbReference type="GO" id="GO:0031288">
    <property type="term" value="P:sorocarp morphogenesis"/>
    <property type="evidence" value="ECO:0000318"/>
    <property type="project" value="GO_Central"/>
</dbReference>
<dbReference type="CDD" id="cd03233">
    <property type="entry name" value="ABCG_PDR_domain1"/>
    <property type="match status" value="1"/>
</dbReference>
<dbReference type="CDD" id="cd03232">
    <property type="entry name" value="ABCG_PDR_domain2"/>
    <property type="match status" value="1"/>
</dbReference>
<dbReference type="FunFam" id="3.40.50.300:FF:000054">
    <property type="entry name" value="ABC multidrug transporter atrF"/>
    <property type="match status" value="1"/>
</dbReference>
<dbReference type="FunFam" id="3.40.50.300:FF:002175">
    <property type="entry name" value="ABC transporter G family member 9"/>
    <property type="match status" value="1"/>
</dbReference>
<dbReference type="Gene3D" id="3.40.50.300">
    <property type="entry name" value="P-loop containing nucleotide triphosphate hydrolases"/>
    <property type="match status" value="2"/>
</dbReference>
<dbReference type="InterPro" id="IPR003593">
    <property type="entry name" value="AAA+_ATPase"/>
</dbReference>
<dbReference type="InterPro" id="IPR013525">
    <property type="entry name" value="ABC2_TM"/>
</dbReference>
<dbReference type="InterPro" id="IPR029481">
    <property type="entry name" value="ABC_trans_N"/>
</dbReference>
<dbReference type="InterPro" id="IPR003439">
    <property type="entry name" value="ABC_transporter-like_ATP-bd"/>
</dbReference>
<dbReference type="InterPro" id="IPR043926">
    <property type="entry name" value="ABCG_dom"/>
</dbReference>
<dbReference type="InterPro" id="IPR034001">
    <property type="entry name" value="ABCG_PDR_1"/>
</dbReference>
<dbReference type="InterPro" id="IPR034003">
    <property type="entry name" value="ABCG_PDR_2"/>
</dbReference>
<dbReference type="InterPro" id="IPR027417">
    <property type="entry name" value="P-loop_NTPase"/>
</dbReference>
<dbReference type="InterPro" id="IPR010929">
    <property type="entry name" value="PDR_CDR_ABC"/>
</dbReference>
<dbReference type="PANTHER" id="PTHR19241">
    <property type="entry name" value="ATP-BINDING CASSETTE TRANSPORTER"/>
    <property type="match status" value="1"/>
</dbReference>
<dbReference type="Pfam" id="PF01061">
    <property type="entry name" value="ABC2_membrane"/>
    <property type="match status" value="2"/>
</dbReference>
<dbReference type="Pfam" id="PF19055">
    <property type="entry name" value="ABC2_membrane_7"/>
    <property type="match status" value="1"/>
</dbReference>
<dbReference type="Pfam" id="PF00005">
    <property type="entry name" value="ABC_tran"/>
    <property type="match status" value="2"/>
</dbReference>
<dbReference type="Pfam" id="PF14510">
    <property type="entry name" value="ABC_trans_N"/>
    <property type="match status" value="1"/>
</dbReference>
<dbReference type="Pfam" id="PF06422">
    <property type="entry name" value="PDR_CDR"/>
    <property type="match status" value="2"/>
</dbReference>
<dbReference type="SMART" id="SM00382">
    <property type="entry name" value="AAA"/>
    <property type="match status" value="2"/>
</dbReference>
<dbReference type="SUPFAM" id="SSF52540">
    <property type="entry name" value="P-loop containing nucleoside triphosphate hydrolases"/>
    <property type="match status" value="2"/>
</dbReference>
<dbReference type="PROSITE" id="PS50893">
    <property type="entry name" value="ABC_TRANSPORTER_2"/>
    <property type="match status" value="2"/>
</dbReference>
<feature type="chain" id="PRO_0000391400" description="ABC transporter G family member 14">
    <location>
        <begin position="1"/>
        <end position="1439"/>
    </location>
</feature>
<feature type="transmembrane region" description="Helical" evidence="1">
    <location>
        <begin position="479"/>
        <end position="499"/>
    </location>
</feature>
<feature type="transmembrane region" description="Helical" evidence="1">
    <location>
        <begin position="516"/>
        <end position="536"/>
    </location>
</feature>
<feature type="transmembrane region" description="Helical" evidence="1">
    <location>
        <begin position="564"/>
        <end position="584"/>
    </location>
</feature>
<feature type="transmembrane region" description="Helical" evidence="1">
    <location>
        <begin position="589"/>
        <end position="609"/>
    </location>
</feature>
<feature type="transmembrane region" description="Helical" evidence="1">
    <location>
        <begin position="614"/>
        <end position="634"/>
    </location>
</feature>
<feature type="transmembrane region" description="Helical" evidence="1">
    <location>
        <begin position="734"/>
        <end position="754"/>
    </location>
</feature>
<feature type="transmembrane region" description="Helical" evidence="1">
    <location>
        <begin position="1144"/>
        <end position="1164"/>
    </location>
</feature>
<feature type="transmembrane region" description="Helical" evidence="1">
    <location>
        <begin position="1175"/>
        <end position="1195"/>
    </location>
</feature>
<feature type="transmembrane region" description="Helical" evidence="1">
    <location>
        <begin position="1217"/>
        <end position="1237"/>
    </location>
</feature>
<feature type="transmembrane region" description="Helical" evidence="1">
    <location>
        <begin position="1256"/>
        <end position="1276"/>
    </location>
</feature>
<feature type="transmembrane region" description="Helical" evidence="1">
    <location>
        <begin position="1283"/>
        <end position="1303"/>
    </location>
</feature>
<feature type="transmembrane region" description="Helical" evidence="1">
    <location>
        <begin position="1413"/>
        <end position="1433"/>
    </location>
</feature>
<feature type="domain" description="ABC transporter 1" evidence="2">
    <location>
        <begin position="117"/>
        <end position="370"/>
    </location>
</feature>
<feature type="domain" description="ABC transmembrane type-2 1">
    <location>
        <begin position="475"/>
        <end position="700"/>
    </location>
</feature>
<feature type="domain" description="ABC transporter 2" evidence="2">
    <location>
        <begin position="805"/>
        <end position="1049"/>
    </location>
</feature>
<feature type="domain" description="ABC transmembrane type-2 2">
    <location>
        <begin position="1141"/>
        <end position="1366"/>
    </location>
</feature>
<feature type="region of interest" description="Disordered" evidence="3">
    <location>
        <begin position="1"/>
        <end position="21"/>
    </location>
</feature>
<feature type="compositionally biased region" description="Basic and acidic residues" evidence="3">
    <location>
        <begin position="1"/>
        <end position="17"/>
    </location>
</feature>
<feature type="binding site" evidence="2">
    <location>
        <begin position="841"/>
        <end position="848"/>
    </location>
    <ligand>
        <name>ATP</name>
        <dbReference type="ChEBI" id="CHEBI:30616"/>
    </ligand>
</feature>
<feature type="sequence conflict" description="In Ref. 1; AAL91499." evidence="4" ref="1">
    <original>F</original>
    <variation>V</variation>
    <location>
        <position position="1267"/>
    </location>
</feature>
<evidence type="ECO:0000255" key="1"/>
<evidence type="ECO:0000255" key="2">
    <source>
        <dbReference type="PROSITE-ProRule" id="PRU00434"/>
    </source>
</evidence>
<evidence type="ECO:0000256" key="3">
    <source>
        <dbReference type="SAM" id="MobiDB-lite"/>
    </source>
</evidence>
<evidence type="ECO:0000305" key="4"/>
<organism>
    <name type="scientific">Dictyostelium discoideum</name>
    <name type="common">Social amoeba</name>
    <dbReference type="NCBI Taxonomy" id="44689"/>
    <lineage>
        <taxon>Eukaryota</taxon>
        <taxon>Amoebozoa</taxon>
        <taxon>Evosea</taxon>
        <taxon>Eumycetozoa</taxon>
        <taxon>Dictyostelia</taxon>
        <taxon>Dictyosteliales</taxon>
        <taxon>Dictyosteliaceae</taxon>
        <taxon>Dictyostelium</taxon>
    </lineage>
</organism>
<accession>Q55DR1</accession>
<accession>Q8T679</accession>
<proteinExistence type="inferred from homology"/>